<gene>
    <name evidence="5" type="primary">opdH</name>
    <name type="ORF">PDE_01229</name>
</gene>
<organism>
    <name type="scientific">Penicillium oxalicum (strain 114-2 / CGMCC 5302)</name>
    <name type="common">Penicillium decumbens</name>
    <dbReference type="NCBI Taxonomy" id="933388"/>
    <lineage>
        <taxon>Eukaryota</taxon>
        <taxon>Fungi</taxon>
        <taxon>Dikarya</taxon>
        <taxon>Ascomycota</taxon>
        <taxon>Pezizomycotina</taxon>
        <taxon>Eurotiomycetes</taxon>
        <taxon>Eurotiomycetidae</taxon>
        <taxon>Eurotiales</taxon>
        <taxon>Aspergillaceae</taxon>
        <taxon>Penicillium</taxon>
    </lineage>
</organism>
<accession>S8AKE6</accession>
<dbReference type="EMBL" id="KB644408">
    <property type="protein sequence ID" value="EPS26293.1"/>
    <property type="molecule type" value="Genomic_DNA"/>
</dbReference>
<dbReference type="SMR" id="S8AKE6"/>
<dbReference type="HOGENOM" id="CLU_182418_0_0_1"/>
<dbReference type="OrthoDB" id="4478077at2759"/>
<dbReference type="PhylomeDB" id="S8AKE6"/>
<dbReference type="Proteomes" id="UP000019376">
    <property type="component" value="Unassembled WGS sequence"/>
</dbReference>
<dbReference type="GO" id="GO:0005576">
    <property type="term" value="C:extracellular region"/>
    <property type="evidence" value="ECO:0007669"/>
    <property type="project" value="UniProtKB-SubCell"/>
</dbReference>
<dbReference type="GO" id="GO:0030430">
    <property type="term" value="C:host cell cytoplasm"/>
    <property type="evidence" value="ECO:0007669"/>
    <property type="project" value="UniProtKB-SubCell"/>
</dbReference>
<dbReference type="GO" id="GO:0050832">
    <property type="term" value="P:defense response to fungus"/>
    <property type="evidence" value="ECO:0007669"/>
    <property type="project" value="UniProtKB-KW"/>
</dbReference>
<dbReference type="GO" id="GO:0031640">
    <property type="term" value="P:killing of cells of another organism"/>
    <property type="evidence" value="ECO:0007669"/>
    <property type="project" value="UniProtKB-KW"/>
</dbReference>
<dbReference type="Gene3D" id="2.40.50.60">
    <property type="entry name" value="Antifungal protein domain"/>
    <property type="match status" value="1"/>
</dbReference>
<dbReference type="InterPro" id="IPR023112">
    <property type="entry name" value="Antifungal-protein_dom_sf"/>
</dbReference>
<dbReference type="InterPro" id="IPR022706">
    <property type="entry name" value="Antifungal_prot"/>
</dbReference>
<dbReference type="Pfam" id="PF11402">
    <property type="entry name" value="Antifungal_prot"/>
    <property type="match status" value="1"/>
</dbReference>
<dbReference type="SUPFAM" id="SSF57598">
    <property type="entry name" value="Antifungal protein (AGAFP)"/>
    <property type="match status" value="1"/>
</dbReference>
<proteinExistence type="inferred from homology"/>
<feature type="signal peptide" evidence="3">
    <location>
        <begin position="1"/>
        <end position="18"/>
    </location>
</feature>
<feature type="propeptide" id="PRO_0000457055" evidence="1">
    <location>
        <begin position="19"/>
        <end position="33"/>
    </location>
</feature>
<feature type="chain" id="PRO_5004560697" description="Antifungal protein opdH">
    <location>
        <begin position="34"/>
        <end position="91"/>
    </location>
</feature>
<feature type="disulfide bond" evidence="2">
    <location>
        <begin position="41"/>
        <end position="69"/>
    </location>
</feature>
<feature type="disulfide bond" evidence="2">
    <location>
        <begin position="48"/>
        <end position="76"/>
    </location>
</feature>
<feature type="disulfide bond" evidence="2">
    <location>
        <begin position="61"/>
        <end position="87"/>
    </location>
</feature>
<comment type="function">
    <text evidence="1 4">Antifungal protein; part of the gene cluster that mediates the biosynthesis of oxopyrrolidines, polyketide-amino acid hybrid compounds with feature structures of tetramic acid (PubMed:36005526). Acts as an inhibitor of growth of various molds and yeasts (By similarity).</text>
</comment>
<comment type="subcellular location">
    <subcellularLocation>
        <location evidence="1">Secreted</location>
    </subcellularLocation>
    <subcellularLocation>
        <location evidence="1">Host cytoplasm</location>
    </subcellularLocation>
</comment>
<comment type="disruption phenotype">
    <text evidence="4">Does not affect the production of oxopyrrolidines A and B.</text>
</comment>
<comment type="similarity">
    <text evidence="6">Belongs to the antifungal protein pafB family.</text>
</comment>
<protein>
    <recommendedName>
        <fullName evidence="5">Antifungal protein opdH</fullName>
    </recommendedName>
    <alternativeName>
        <fullName evidence="5">Oxopyrrolidines biosynthesis cluster protein H</fullName>
    </alternativeName>
</protein>
<reference key="1">
    <citation type="journal article" date="2013" name="PLoS ONE">
        <title>Genomic and secretomic analyses reveal unique features of the lignocellulolytic enzyme system of Penicillium decumbens.</title>
        <authorList>
            <person name="Liu G."/>
            <person name="Zhang L."/>
            <person name="Wei X."/>
            <person name="Zou G."/>
            <person name="Qin Y."/>
            <person name="Ma L."/>
            <person name="Li J."/>
            <person name="Zheng H."/>
            <person name="Wang S."/>
            <person name="Wang C."/>
            <person name="Xun L."/>
            <person name="Zhao G.-P."/>
            <person name="Zhou Z."/>
            <person name="Qu Y."/>
        </authorList>
    </citation>
    <scope>NUCLEOTIDE SEQUENCE [LARGE SCALE GENOMIC DNA]</scope>
    <source>
        <strain>114-2 / CGMCC 5302</strain>
    </source>
</reference>
<reference key="2">
    <citation type="journal article" date="2022" name="Mar. Drugs">
        <title>Identification of PKS-NRPS Hybrid Metabolites in Marine-Derived Penicillium oxalicum.</title>
        <authorList>
            <person name="Li H."/>
            <person name="Zhang W."/>
            <person name="Zhang X."/>
            <person name="Tang S."/>
            <person name="Men P."/>
            <person name="Xiong M."/>
            <person name="Li Z."/>
            <person name="Zhang Y."/>
            <person name="Huang X."/>
            <person name="Lu X."/>
        </authorList>
    </citation>
    <scope>FUNCTION</scope>
    <scope>DISRUPTION PHENOTYPE</scope>
</reference>
<keyword id="KW-0929">Antimicrobial</keyword>
<keyword id="KW-1015">Disulfide bond</keyword>
<keyword id="KW-0295">Fungicide</keyword>
<keyword id="KW-1035">Host cytoplasm</keyword>
<keyword id="KW-1185">Reference proteome</keyword>
<keyword id="KW-0964">Secreted</keyword>
<keyword id="KW-0732">Signal</keyword>
<sequence>MQFSSLSLVFLAVIGAIANPIAVDSELENRDVQLSKYGGECNLKTNACRYTKGGKSVFVPCGTAANKRCKSDRHHCEYDEHHKRVDCQTPV</sequence>
<name>OPDH_PENO1</name>
<evidence type="ECO:0000250" key="1">
    <source>
        <dbReference type="UniProtKB" id="D0EXD3"/>
    </source>
</evidence>
<evidence type="ECO:0000250" key="2">
    <source>
        <dbReference type="UniProtKB" id="P17737"/>
    </source>
</evidence>
<evidence type="ECO:0000255" key="3"/>
<evidence type="ECO:0000269" key="4">
    <source>
    </source>
</evidence>
<evidence type="ECO:0000303" key="5">
    <source>
    </source>
</evidence>
<evidence type="ECO:0000305" key="6"/>